<dbReference type="EC" id="3.5.1.98" evidence="1"/>
<dbReference type="EMBL" id="AF513384">
    <property type="protein sequence ID" value="AAP47173.1"/>
    <property type="molecule type" value="mRNA"/>
</dbReference>
<dbReference type="EMBL" id="AP004039">
    <property type="protein sequence ID" value="BAD25048.1"/>
    <property type="molecule type" value="Genomic_DNA"/>
</dbReference>
<dbReference type="EMBL" id="AP008208">
    <property type="protein sequence ID" value="BAF08198.1"/>
    <property type="molecule type" value="Genomic_DNA"/>
</dbReference>
<dbReference type="EMBL" id="AP014958">
    <property type="protein sequence ID" value="BAS77624.1"/>
    <property type="molecule type" value="Genomic_DNA"/>
</dbReference>
<dbReference type="RefSeq" id="XP_015623652.1">
    <property type="nucleotide sequence ID" value="XM_015768166.1"/>
</dbReference>
<dbReference type="SMR" id="Q7Y0Y6"/>
<dbReference type="FunCoup" id="Q7Y0Y6">
    <property type="interactions" value="2563"/>
</dbReference>
<dbReference type="STRING" id="39947.Q7Y0Y6"/>
<dbReference type="PaxDb" id="39947-Q7Y0Y6"/>
<dbReference type="EnsemblPlants" id="Os02t0214900-01">
    <property type="protein sequence ID" value="Os02t0214900-01"/>
    <property type="gene ID" value="Os02g0214900"/>
</dbReference>
<dbReference type="Gramene" id="Os02t0214900-01">
    <property type="protein sequence ID" value="Os02t0214900-01"/>
    <property type="gene ID" value="Os02g0214900"/>
</dbReference>
<dbReference type="KEGG" id="dosa:Os02g0214900"/>
<dbReference type="eggNOG" id="KOG1342">
    <property type="taxonomic scope" value="Eukaryota"/>
</dbReference>
<dbReference type="HOGENOM" id="CLU_007727_7_12_1"/>
<dbReference type="InParanoid" id="Q7Y0Y6"/>
<dbReference type="OMA" id="HYGLHEN"/>
<dbReference type="OrthoDB" id="1918432at2759"/>
<dbReference type="PlantReactome" id="R-OSA-6787011">
    <property type="pathway name" value="Jasmonic acid signaling"/>
</dbReference>
<dbReference type="Proteomes" id="UP000000763">
    <property type="component" value="Chromosome 2"/>
</dbReference>
<dbReference type="Proteomes" id="UP000059680">
    <property type="component" value="Chromosome 2"/>
</dbReference>
<dbReference type="ExpressionAtlas" id="Q7Y0Y6">
    <property type="expression patterns" value="baseline and differential"/>
</dbReference>
<dbReference type="GO" id="GO:0005634">
    <property type="term" value="C:nucleus"/>
    <property type="evidence" value="ECO:0000318"/>
    <property type="project" value="GO_Central"/>
</dbReference>
<dbReference type="GO" id="GO:0004407">
    <property type="term" value="F:histone deacetylase activity"/>
    <property type="evidence" value="ECO:0000318"/>
    <property type="project" value="GO_Central"/>
</dbReference>
<dbReference type="GO" id="GO:0141221">
    <property type="term" value="F:histone deacetylase activity, hydrolytic mechanism"/>
    <property type="evidence" value="ECO:0007669"/>
    <property type="project" value="UniProtKB-EC"/>
</dbReference>
<dbReference type="GO" id="GO:0008270">
    <property type="term" value="F:zinc ion binding"/>
    <property type="evidence" value="ECO:0000250"/>
    <property type="project" value="UniProtKB"/>
</dbReference>
<dbReference type="GO" id="GO:0040029">
    <property type="term" value="P:epigenetic regulation of gene expression"/>
    <property type="evidence" value="ECO:0000318"/>
    <property type="project" value="GO_Central"/>
</dbReference>
<dbReference type="FunFam" id="3.40.800.20:FF:000001">
    <property type="entry name" value="Histone deacetylase"/>
    <property type="match status" value="1"/>
</dbReference>
<dbReference type="Gene3D" id="3.40.800.20">
    <property type="entry name" value="Histone deacetylase domain"/>
    <property type="match status" value="1"/>
</dbReference>
<dbReference type="InterPro" id="IPR050284">
    <property type="entry name" value="HDAC_PDAC"/>
</dbReference>
<dbReference type="InterPro" id="IPR000286">
    <property type="entry name" value="His_deacetylse"/>
</dbReference>
<dbReference type="InterPro" id="IPR003084">
    <property type="entry name" value="His_deacetylse_1"/>
</dbReference>
<dbReference type="InterPro" id="IPR023801">
    <property type="entry name" value="His_deacetylse_dom"/>
</dbReference>
<dbReference type="InterPro" id="IPR037138">
    <property type="entry name" value="His_deacetylse_dom_sf"/>
</dbReference>
<dbReference type="InterPro" id="IPR023696">
    <property type="entry name" value="Ureohydrolase_dom_sf"/>
</dbReference>
<dbReference type="PANTHER" id="PTHR10625:SF22">
    <property type="entry name" value="HISTONE DEACETYLASE 2"/>
    <property type="match status" value="1"/>
</dbReference>
<dbReference type="PANTHER" id="PTHR10625">
    <property type="entry name" value="HISTONE DEACETYLASE HDAC1-RELATED"/>
    <property type="match status" value="1"/>
</dbReference>
<dbReference type="Pfam" id="PF00850">
    <property type="entry name" value="Hist_deacetyl"/>
    <property type="match status" value="1"/>
</dbReference>
<dbReference type="PIRSF" id="PIRSF037913">
    <property type="entry name" value="His_deacetylse_1"/>
    <property type="match status" value="1"/>
</dbReference>
<dbReference type="PRINTS" id="PR01270">
    <property type="entry name" value="HDASUPER"/>
</dbReference>
<dbReference type="PRINTS" id="PR01271">
    <property type="entry name" value="HISDACETLASE"/>
</dbReference>
<dbReference type="SUPFAM" id="SSF52768">
    <property type="entry name" value="Arginase/deacetylase"/>
    <property type="match status" value="1"/>
</dbReference>
<name>HDAC3_ORYSJ</name>
<feature type="chain" id="PRO_0000440562" description="Histone deacetylase 3">
    <location>
        <begin position="1"/>
        <end position="510"/>
    </location>
</feature>
<feature type="region of interest" description="Histone deacetylase" evidence="8">
    <location>
        <begin position="24"/>
        <end position="338"/>
    </location>
</feature>
<feature type="region of interest" description="Disordered" evidence="3">
    <location>
        <begin position="394"/>
        <end position="510"/>
    </location>
</feature>
<feature type="compositionally biased region" description="Basic and acidic residues" evidence="3">
    <location>
        <begin position="418"/>
        <end position="434"/>
    </location>
</feature>
<feature type="compositionally biased region" description="Basic and acidic residues" evidence="3">
    <location>
        <begin position="448"/>
        <end position="472"/>
    </location>
</feature>
<feature type="compositionally biased region" description="Low complexity" evidence="3">
    <location>
        <begin position="485"/>
        <end position="503"/>
    </location>
</feature>
<feature type="active site" description="Proton donor/acceptor" evidence="2">
    <location>
        <position position="158"/>
    </location>
</feature>
<feature type="binding site" evidence="2">
    <location>
        <position position="193"/>
    </location>
    <ligand>
        <name>Zn(2+)</name>
        <dbReference type="ChEBI" id="CHEBI:29105"/>
    </ligand>
</feature>
<feature type="binding site" evidence="2">
    <location>
        <position position="195"/>
    </location>
    <ligand>
        <name>Zn(2+)</name>
        <dbReference type="ChEBI" id="CHEBI:29105"/>
    </ligand>
</feature>
<feature type="binding site" evidence="2">
    <location>
        <position position="281"/>
    </location>
    <ligand>
        <name>Zn(2+)</name>
        <dbReference type="ChEBI" id="CHEBI:29105"/>
    </ligand>
</feature>
<feature type="site" description="Polarizes the scissile carbonyl of the substrate" evidence="2">
    <location>
        <position position="320"/>
    </location>
</feature>
<comment type="function">
    <text evidence="1">Responsible for the deacetylation of lysine residues on the N-terminal part of the core histones (H2A, H2B, H3 and H4). Histone deacetylation gives a tag for epigenetic repression and plays an important role in transcriptional regulation, cell cycle progression and developmental events. Histone deacetylases act via the formation of large multiprotein complexes.</text>
</comment>
<comment type="catalytic activity">
    <reaction evidence="1">
        <text>N(6)-acetyl-L-lysyl-[histone] + H2O = L-lysyl-[histone] + acetate</text>
        <dbReference type="Rhea" id="RHEA:58196"/>
        <dbReference type="Rhea" id="RHEA-COMP:9845"/>
        <dbReference type="Rhea" id="RHEA-COMP:11338"/>
        <dbReference type="ChEBI" id="CHEBI:15377"/>
        <dbReference type="ChEBI" id="CHEBI:29969"/>
        <dbReference type="ChEBI" id="CHEBI:30089"/>
        <dbReference type="ChEBI" id="CHEBI:61930"/>
        <dbReference type="EC" id="3.5.1.98"/>
    </reaction>
</comment>
<comment type="cofactor">
    <cofactor evidence="2">
        <name>Zn(2+)</name>
        <dbReference type="ChEBI" id="CHEBI:29105"/>
    </cofactor>
    <text evidence="2">Binds 1 zinc ion per subunit.</text>
</comment>
<comment type="subcellular location">
    <subcellularLocation>
        <location evidence="1">Nucleus</location>
    </subcellularLocation>
</comment>
<comment type="tissue specificity">
    <text evidence="4">Expressed in roots.</text>
</comment>
<comment type="induction">
    <text evidence="5">Induced by drought and salt stresses.</text>
</comment>
<comment type="miscellaneous">
    <text evidence="5">Plants silencing HDAC3 exhibit reduced peduncle elongation and fertility.</text>
</comment>
<comment type="similarity">
    <text evidence="8">Belongs to the histone deacetylase family. HD Type 1 subfamily.</text>
</comment>
<sequence length="510" mass="56504">MDPSSAGAGGNSLASASCGDAQKRRVCYFYDPEVGNYYYGQGHPMKPHRVRMTHALLAHYGLLAPAKMEVLRPLPARGIDLCRFHSDDYVAFLRAVTPETQLGQVRALRRFNIGPDCPVFDGLYAYCQTYAGASVGAAVKLNHGTHDIAINWSGGLHHAKKSEASGFCYVNDIVLAILELLKLHERVLYIDIDIHHGDGVEEAFYTTNRVMTVSFHKFGDYFPGTGDIRDIGYSEGKYYCLNVPLDDGIDDDSYQSIFKPIISKVMEMYRPGAVVLQCGADSLSGDRLGCFNLSGKGHAECVKFMRSFNVPLLLLGGGGYTIRNVARCWCYETGVALGEELQEKLPYNEYYEYFGPEYSLYVAASNMENRNTNKQLEEIKCNILDNLSKLQHAPSVQFQERIPETKLPEPDEDQEDPDERHDPDSDMVLDDHKPTGHSARSLIHNIGVKREITETETKDQHGKRLTTEHKGPEPMAEDLGSSKQAPTADANAVAVNAPGNARNEPGSSPK</sequence>
<proteinExistence type="evidence at transcript level"/>
<evidence type="ECO:0000250" key="1">
    <source>
        <dbReference type="UniProtKB" id="O22446"/>
    </source>
</evidence>
<evidence type="ECO:0000250" key="2">
    <source>
        <dbReference type="UniProtKB" id="Q8GXJ1"/>
    </source>
</evidence>
<evidence type="ECO:0000256" key="3">
    <source>
        <dbReference type="SAM" id="MobiDB-lite"/>
    </source>
</evidence>
<evidence type="ECO:0000269" key="4">
    <source>
    </source>
</evidence>
<evidence type="ECO:0000269" key="5">
    <source>
    </source>
</evidence>
<evidence type="ECO:0000303" key="6">
    <source>
    </source>
</evidence>
<evidence type="ECO:0000303" key="7">
    <source>
    </source>
</evidence>
<evidence type="ECO:0000305" key="8"/>
<evidence type="ECO:0000312" key="9">
    <source>
        <dbReference type="EMBL" id="AAP47173.1"/>
    </source>
</evidence>
<evidence type="ECO:0000312" key="10">
    <source>
        <dbReference type="EMBL" id="BAD25048.1"/>
    </source>
</evidence>
<evidence type="ECO:0000312" key="11">
    <source>
        <dbReference type="EMBL" id="BAF08198.1"/>
    </source>
</evidence>
<protein>
    <recommendedName>
        <fullName evidence="6">Histone deacetylase 3</fullName>
        <shortName evidence="6">OsHDAC3</shortName>
        <ecNumber evidence="1">3.5.1.98</ecNumber>
    </recommendedName>
</protein>
<keyword id="KW-0156">Chromatin regulator</keyword>
<keyword id="KW-0378">Hydrolase</keyword>
<keyword id="KW-0479">Metal-binding</keyword>
<keyword id="KW-0539">Nucleus</keyword>
<keyword id="KW-1185">Reference proteome</keyword>
<keyword id="KW-0678">Repressor</keyword>
<keyword id="KW-0804">Transcription</keyword>
<keyword id="KW-0805">Transcription regulation</keyword>
<keyword id="KW-0862">Zinc</keyword>
<reference key="1">
    <citation type="journal article" date="2003" name="Plant J.">
        <title>Structure and expression of the rice class-I type histone deacetylase genes OsHDAC1-3: OsHDAC1 overexpression in transgenic plants leads to increased growth rate and altered architecture.</title>
        <authorList>
            <person name="Jang I.C."/>
            <person name="Pahk Y.M."/>
            <person name="Song S.I."/>
            <person name="Kwon H.J."/>
            <person name="Nahm B.H."/>
            <person name="Kim J.K."/>
        </authorList>
    </citation>
    <scope>NUCLEOTIDE SEQUENCE [MRNA]</scope>
    <scope>TISSUE SPECIFICITY</scope>
</reference>
<reference key="2">
    <citation type="journal article" date="2005" name="Nature">
        <title>The map-based sequence of the rice genome.</title>
        <authorList>
            <consortium name="International rice genome sequencing project (IRGSP)"/>
        </authorList>
    </citation>
    <scope>NUCLEOTIDE SEQUENCE [LARGE SCALE GENOMIC DNA]</scope>
    <source>
        <strain>cv. Nipponbare</strain>
        <tissue evidence="9">Callus</tissue>
    </source>
</reference>
<reference key="3">
    <citation type="journal article" date="2008" name="Nucleic Acids Res.">
        <title>The rice annotation project database (RAP-DB): 2008 update.</title>
        <authorList>
            <consortium name="The rice annotation project (RAP)"/>
        </authorList>
    </citation>
    <scope>GENOME REANNOTATION</scope>
    <source>
        <strain>cv. Nipponbare</strain>
    </source>
</reference>
<reference key="4">
    <citation type="journal article" date="2013" name="Rice">
        <title>Improvement of the Oryza sativa Nipponbare reference genome using next generation sequence and optical map data.</title>
        <authorList>
            <person name="Kawahara Y."/>
            <person name="de la Bastide M."/>
            <person name="Hamilton J.P."/>
            <person name="Kanamori H."/>
            <person name="McCombie W.R."/>
            <person name="Ouyang S."/>
            <person name="Schwartz D.C."/>
            <person name="Tanaka T."/>
            <person name="Wu J."/>
            <person name="Zhou S."/>
            <person name="Childs K.L."/>
            <person name="Davidson R.M."/>
            <person name="Lin H."/>
            <person name="Quesada-Ocampo L."/>
            <person name="Vaillancourt B."/>
            <person name="Sakai H."/>
            <person name="Lee S.S."/>
            <person name="Kim J."/>
            <person name="Numa H."/>
            <person name="Itoh T."/>
            <person name="Buell C.R."/>
            <person name="Matsumoto T."/>
        </authorList>
    </citation>
    <scope>GENOME REANNOTATION</scope>
    <source>
        <strain>cv. Nipponbare</strain>
    </source>
</reference>
<reference key="5">
    <citation type="journal article" date="2009" name="Biochem. Biophys. Res. Commun.">
        <title>Rice histone deacetylase genes display specific expression patterns and developmental functions.</title>
        <authorList>
            <person name="Hu Y."/>
            <person name="Qin F."/>
            <person name="Huang L."/>
            <person name="Sun Q."/>
            <person name="Li C."/>
            <person name="Zhao Y."/>
            <person name="Zhou D.X."/>
        </authorList>
    </citation>
    <scope>INDUCTION</scope>
</reference>
<accession>Q7Y0Y6</accession>
<organism>
    <name type="scientific">Oryza sativa subsp. japonica</name>
    <name type="common">Rice</name>
    <dbReference type="NCBI Taxonomy" id="39947"/>
    <lineage>
        <taxon>Eukaryota</taxon>
        <taxon>Viridiplantae</taxon>
        <taxon>Streptophyta</taxon>
        <taxon>Embryophyta</taxon>
        <taxon>Tracheophyta</taxon>
        <taxon>Spermatophyta</taxon>
        <taxon>Magnoliopsida</taxon>
        <taxon>Liliopsida</taxon>
        <taxon>Poales</taxon>
        <taxon>Poaceae</taxon>
        <taxon>BOP clade</taxon>
        <taxon>Oryzoideae</taxon>
        <taxon>Oryzeae</taxon>
        <taxon>Oryzinae</taxon>
        <taxon>Oryza</taxon>
        <taxon>Oryza sativa</taxon>
    </lineage>
</organism>
<gene>
    <name evidence="6" type="primary">HDAC3</name>
    <name evidence="7" type="synonym">HDA703</name>
    <name evidence="11" type="ordered locus">Os02g0214900</name>
    <name evidence="8" type="ordered locus">LOC_Os02g12350</name>
    <name evidence="10" type="ORF">OJ1006_D05.27-1</name>
</gene>